<protein>
    <recommendedName>
        <fullName evidence="1">GTPase Obg</fullName>
        <ecNumber evidence="1">3.6.5.-</ecNumber>
    </recommendedName>
    <alternativeName>
        <fullName evidence="1">GTP-binding protein Obg</fullName>
    </alternativeName>
</protein>
<keyword id="KW-0963">Cytoplasm</keyword>
<keyword id="KW-0342">GTP-binding</keyword>
<keyword id="KW-0378">Hydrolase</keyword>
<keyword id="KW-0460">Magnesium</keyword>
<keyword id="KW-0479">Metal-binding</keyword>
<keyword id="KW-0547">Nucleotide-binding</keyword>
<reference key="1">
    <citation type="journal article" date="2007" name="Science">
        <title>The Calyptogena magnifica chemoautotrophic symbiont genome.</title>
        <authorList>
            <person name="Newton I.L.G."/>
            <person name="Woyke T."/>
            <person name="Auchtung T.A."/>
            <person name="Dilly G.F."/>
            <person name="Dutton R.J."/>
            <person name="Fisher M.C."/>
            <person name="Fontanez K.M."/>
            <person name="Lau E."/>
            <person name="Stewart F.J."/>
            <person name="Richardson P.M."/>
            <person name="Barry K.W."/>
            <person name="Saunders E."/>
            <person name="Detter J.C."/>
            <person name="Wu D."/>
            <person name="Eisen J.A."/>
            <person name="Cavanaugh C.M."/>
        </authorList>
    </citation>
    <scope>NUCLEOTIDE SEQUENCE [LARGE SCALE GENOMIC DNA]</scope>
</reference>
<evidence type="ECO:0000255" key="1">
    <source>
        <dbReference type="HAMAP-Rule" id="MF_01454"/>
    </source>
</evidence>
<evidence type="ECO:0000255" key="2">
    <source>
        <dbReference type="PROSITE-ProRule" id="PRU01231"/>
    </source>
</evidence>
<gene>
    <name evidence="1" type="primary">obg</name>
    <name type="ordered locus">Rmag_0412</name>
</gene>
<sequence>MKFVDSASIRIEAGKGGAGCLGFRREKYIPDGGPDGGDGGDGGHIYFQGQEGFNTLSEFRFKRLFRAKNGQPGSGQNKRGKSAQHLTVEIPLGTKIYDLETDELIGEMIEHEQIILVAKGGFHGLGNTRFKSSINRAPRKTTPGSPGEIREIGLELSIMADIGLLGMPNAGKSSLIRQISNAKSKVANYPFTTLHPSLGVVSYYDEHIIMADIPGLIENASKGVGLGFEFLKHLFHTKALLHVVDIFPVDGSDPVENFLTIEKELKKYDQKLAKKPRLLAINKMDLLSGGDRETVVQSLLKGTRYNGKVYRISALNGLGCKNLVAGLFKLVKENE</sequence>
<accession>A1AW67</accession>
<proteinExistence type="inferred from homology"/>
<name>OBG_RUTMC</name>
<feature type="chain" id="PRO_0000386213" description="GTPase Obg">
    <location>
        <begin position="1"/>
        <end position="335"/>
    </location>
</feature>
<feature type="domain" description="Obg" evidence="2">
    <location>
        <begin position="1"/>
        <end position="159"/>
    </location>
</feature>
<feature type="domain" description="OBG-type G" evidence="1">
    <location>
        <begin position="160"/>
        <end position="332"/>
    </location>
</feature>
<feature type="binding site" evidence="1">
    <location>
        <begin position="166"/>
        <end position="173"/>
    </location>
    <ligand>
        <name>GTP</name>
        <dbReference type="ChEBI" id="CHEBI:37565"/>
    </ligand>
</feature>
<feature type="binding site" evidence="1">
    <location>
        <position position="173"/>
    </location>
    <ligand>
        <name>Mg(2+)</name>
        <dbReference type="ChEBI" id="CHEBI:18420"/>
    </ligand>
</feature>
<feature type="binding site" evidence="1">
    <location>
        <begin position="191"/>
        <end position="195"/>
    </location>
    <ligand>
        <name>GTP</name>
        <dbReference type="ChEBI" id="CHEBI:37565"/>
    </ligand>
</feature>
<feature type="binding site" evidence="1">
    <location>
        <position position="193"/>
    </location>
    <ligand>
        <name>Mg(2+)</name>
        <dbReference type="ChEBI" id="CHEBI:18420"/>
    </ligand>
</feature>
<feature type="binding site" evidence="1">
    <location>
        <begin position="212"/>
        <end position="215"/>
    </location>
    <ligand>
        <name>GTP</name>
        <dbReference type="ChEBI" id="CHEBI:37565"/>
    </ligand>
</feature>
<feature type="binding site" evidence="1">
    <location>
        <begin position="282"/>
        <end position="285"/>
    </location>
    <ligand>
        <name>GTP</name>
        <dbReference type="ChEBI" id="CHEBI:37565"/>
    </ligand>
</feature>
<feature type="binding site" evidence="1">
    <location>
        <begin position="313"/>
        <end position="315"/>
    </location>
    <ligand>
        <name>GTP</name>
        <dbReference type="ChEBI" id="CHEBI:37565"/>
    </ligand>
</feature>
<organism>
    <name type="scientific">Ruthia magnifica subsp. Calyptogena magnifica</name>
    <dbReference type="NCBI Taxonomy" id="413404"/>
    <lineage>
        <taxon>Bacteria</taxon>
        <taxon>Pseudomonadati</taxon>
        <taxon>Pseudomonadota</taxon>
        <taxon>Gammaproteobacteria</taxon>
        <taxon>Candidatus Pseudothioglobaceae</taxon>
        <taxon>Candidatus Ruthturnera</taxon>
    </lineage>
</organism>
<dbReference type="EC" id="3.6.5.-" evidence="1"/>
<dbReference type="EMBL" id="CP000488">
    <property type="protein sequence ID" value="ABL02174.1"/>
    <property type="molecule type" value="Genomic_DNA"/>
</dbReference>
<dbReference type="SMR" id="A1AW67"/>
<dbReference type="STRING" id="413404.Rmag_0412"/>
<dbReference type="KEGG" id="rma:Rmag_0412"/>
<dbReference type="eggNOG" id="COG0536">
    <property type="taxonomic scope" value="Bacteria"/>
</dbReference>
<dbReference type="HOGENOM" id="CLU_011747_2_3_6"/>
<dbReference type="OrthoDB" id="9807318at2"/>
<dbReference type="Proteomes" id="UP000002587">
    <property type="component" value="Chromosome"/>
</dbReference>
<dbReference type="GO" id="GO:0005737">
    <property type="term" value="C:cytoplasm"/>
    <property type="evidence" value="ECO:0007669"/>
    <property type="project" value="UniProtKB-SubCell"/>
</dbReference>
<dbReference type="GO" id="GO:0005525">
    <property type="term" value="F:GTP binding"/>
    <property type="evidence" value="ECO:0007669"/>
    <property type="project" value="UniProtKB-UniRule"/>
</dbReference>
<dbReference type="GO" id="GO:0003924">
    <property type="term" value="F:GTPase activity"/>
    <property type="evidence" value="ECO:0007669"/>
    <property type="project" value="UniProtKB-UniRule"/>
</dbReference>
<dbReference type="GO" id="GO:0000287">
    <property type="term" value="F:magnesium ion binding"/>
    <property type="evidence" value="ECO:0007669"/>
    <property type="project" value="InterPro"/>
</dbReference>
<dbReference type="GO" id="GO:0042254">
    <property type="term" value="P:ribosome biogenesis"/>
    <property type="evidence" value="ECO:0007669"/>
    <property type="project" value="UniProtKB-UniRule"/>
</dbReference>
<dbReference type="CDD" id="cd01898">
    <property type="entry name" value="Obg"/>
    <property type="match status" value="1"/>
</dbReference>
<dbReference type="FunFam" id="2.70.210.12:FF:000001">
    <property type="entry name" value="GTPase Obg"/>
    <property type="match status" value="1"/>
</dbReference>
<dbReference type="Gene3D" id="2.70.210.12">
    <property type="entry name" value="GTP1/OBG domain"/>
    <property type="match status" value="1"/>
</dbReference>
<dbReference type="Gene3D" id="3.40.50.300">
    <property type="entry name" value="P-loop containing nucleotide triphosphate hydrolases"/>
    <property type="match status" value="1"/>
</dbReference>
<dbReference type="HAMAP" id="MF_01454">
    <property type="entry name" value="GTPase_Obg"/>
    <property type="match status" value="1"/>
</dbReference>
<dbReference type="InterPro" id="IPR031167">
    <property type="entry name" value="G_OBG"/>
</dbReference>
<dbReference type="InterPro" id="IPR006073">
    <property type="entry name" value="GTP-bd"/>
</dbReference>
<dbReference type="InterPro" id="IPR014100">
    <property type="entry name" value="GTP-bd_Obg/CgtA"/>
</dbReference>
<dbReference type="InterPro" id="IPR006074">
    <property type="entry name" value="GTP1-OBG_CS"/>
</dbReference>
<dbReference type="InterPro" id="IPR006169">
    <property type="entry name" value="GTP1_OBG_dom"/>
</dbReference>
<dbReference type="InterPro" id="IPR036726">
    <property type="entry name" value="GTP1_OBG_dom_sf"/>
</dbReference>
<dbReference type="InterPro" id="IPR045086">
    <property type="entry name" value="OBG_GTPase"/>
</dbReference>
<dbReference type="InterPro" id="IPR027417">
    <property type="entry name" value="P-loop_NTPase"/>
</dbReference>
<dbReference type="InterPro" id="IPR005225">
    <property type="entry name" value="Small_GTP-bd"/>
</dbReference>
<dbReference type="NCBIfam" id="TIGR02729">
    <property type="entry name" value="Obg_CgtA"/>
    <property type="match status" value="1"/>
</dbReference>
<dbReference type="NCBIfam" id="NF008955">
    <property type="entry name" value="PRK12297.1"/>
    <property type="match status" value="1"/>
</dbReference>
<dbReference type="NCBIfam" id="NF008956">
    <property type="entry name" value="PRK12299.1"/>
    <property type="match status" value="1"/>
</dbReference>
<dbReference type="NCBIfam" id="TIGR00231">
    <property type="entry name" value="small_GTP"/>
    <property type="match status" value="1"/>
</dbReference>
<dbReference type="PANTHER" id="PTHR11702">
    <property type="entry name" value="DEVELOPMENTALLY REGULATED GTP-BINDING PROTEIN-RELATED"/>
    <property type="match status" value="1"/>
</dbReference>
<dbReference type="PANTHER" id="PTHR11702:SF31">
    <property type="entry name" value="MITOCHONDRIAL RIBOSOME-ASSOCIATED GTPASE 2"/>
    <property type="match status" value="1"/>
</dbReference>
<dbReference type="Pfam" id="PF01018">
    <property type="entry name" value="GTP1_OBG"/>
    <property type="match status" value="1"/>
</dbReference>
<dbReference type="Pfam" id="PF01926">
    <property type="entry name" value="MMR_HSR1"/>
    <property type="match status" value="1"/>
</dbReference>
<dbReference type="PIRSF" id="PIRSF002401">
    <property type="entry name" value="GTP_bd_Obg/CgtA"/>
    <property type="match status" value="1"/>
</dbReference>
<dbReference type="PRINTS" id="PR00326">
    <property type="entry name" value="GTP1OBG"/>
</dbReference>
<dbReference type="SUPFAM" id="SSF82051">
    <property type="entry name" value="Obg GTP-binding protein N-terminal domain"/>
    <property type="match status" value="1"/>
</dbReference>
<dbReference type="SUPFAM" id="SSF52540">
    <property type="entry name" value="P-loop containing nucleoside triphosphate hydrolases"/>
    <property type="match status" value="1"/>
</dbReference>
<dbReference type="PROSITE" id="PS51710">
    <property type="entry name" value="G_OBG"/>
    <property type="match status" value="1"/>
</dbReference>
<dbReference type="PROSITE" id="PS00905">
    <property type="entry name" value="GTP1_OBG"/>
    <property type="match status" value="1"/>
</dbReference>
<dbReference type="PROSITE" id="PS51883">
    <property type="entry name" value="OBG"/>
    <property type="match status" value="1"/>
</dbReference>
<comment type="function">
    <text evidence="1">An essential GTPase which binds GTP, GDP and possibly (p)ppGpp with moderate affinity, with high nucleotide exchange rates and a fairly low GTP hydrolysis rate. Plays a role in control of the cell cycle, stress response, ribosome biogenesis and in those bacteria that undergo differentiation, in morphogenesis control.</text>
</comment>
<comment type="cofactor">
    <cofactor evidence="1">
        <name>Mg(2+)</name>
        <dbReference type="ChEBI" id="CHEBI:18420"/>
    </cofactor>
</comment>
<comment type="subunit">
    <text evidence="1">Monomer.</text>
</comment>
<comment type="subcellular location">
    <subcellularLocation>
        <location evidence="1">Cytoplasm</location>
    </subcellularLocation>
</comment>
<comment type="similarity">
    <text evidence="1">Belongs to the TRAFAC class OBG-HflX-like GTPase superfamily. OBG GTPase family.</text>
</comment>